<feature type="chain" id="PRO_1000008054" description="DNA mismatch repair protein MutS">
    <location>
        <begin position="1"/>
        <end position="910"/>
    </location>
</feature>
<feature type="binding site" evidence="1">
    <location>
        <begin position="615"/>
        <end position="622"/>
    </location>
    <ligand>
        <name>ATP</name>
        <dbReference type="ChEBI" id="CHEBI:30616"/>
    </ligand>
</feature>
<comment type="function">
    <text evidence="1">This protein is involved in the repair of mismatches in DNA. It is possible that it carries out the mismatch recognition step. This protein has a weak ATPase activity.</text>
</comment>
<comment type="similarity">
    <text evidence="1">Belongs to the DNA mismatch repair MutS family.</text>
</comment>
<name>MUTS_CLOP1</name>
<evidence type="ECO:0000255" key="1">
    <source>
        <dbReference type="HAMAP-Rule" id="MF_00096"/>
    </source>
</evidence>
<keyword id="KW-0067">ATP-binding</keyword>
<keyword id="KW-0227">DNA damage</keyword>
<keyword id="KW-0234">DNA repair</keyword>
<keyword id="KW-0238">DNA-binding</keyword>
<keyword id="KW-0547">Nucleotide-binding</keyword>
<sequence length="910" mass="103104">MKLTPMMRQYFEIKENYKDCILFFRLGDFYEMFFEDAETAARELELVLTGRDCGLEKRAPMCGIPFHASNSYIGRLVAKGYKVAICEQVEDPKFAKGIVKRDVIKVITPGTYTDSSFVEETKNNYIMTIYADLERNRCSLAITDISTGDFLATEGELEKGVILDEISKFNPKEIILLDSLDQELIKDITLTTPALISRKPIEYFEENFEEVLNNQFGEKSNSLSLMVKKSSNALVKYILDTQKISLTNINDIEVYSLVDFMTIDLSSRRNLELTENLREKSKKGSLLWVLDKTETSMGSRMLRRWIEEPLVNKEKITLRLNAVEELFNDLSLNDSLKEALHDIYDIERILGKISNKNANAKDLIALKTSIGKIPNVKGIIENCTSSLLKNYHHNLDDLRDIYDLLEKSIKEDPSLTLKDGDLIKDGFNGEIDELRLAKTNGKDWISSLENREREFTGIKSLKVGFNKVFGYYIEISKANYSSIPEGRYIRKQTLANAERFITPELKEIEEKLLGASEKLCSLEYDIFLDIRNEVENHIDRLKTTAKIIAELDCISNLAFVALENDFIKPEINEDGETKIENGRHPVVEKVIPKGEFIPNDTIINKDDNQLLIITGPNMAGKSTYMRQVAIITLMCQIGSFVPASKANISVVDKIFTRIGASDDLAGGKSTFMVEMWEVSNILKNATENSLVLLDEVGRGTSTYDGLSIAWSVIEYICKNKNLRCKTLFATHYHELTKLEGEIHGVRNYSVAVKEVDNNIIFLRKIIEGGADQSYGIEVAKLAGIPDEVINRAKEILETLEMESSKDNLDLALKEVNASKEDIEEASITTSYEVKETLVEEDKIEIKEEVISKASEAKTHKKEDDQIQLDFSAIGKDNLIKELSEVDILSLNPMEAMNRLYALVKEAKNLI</sequence>
<accession>Q0TRD6</accession>
<organism>
    <name type="scientific">Clostridium perfringens (strain ATCC 13124 / DSM 756 / JCM 1290 / NCIMB 6125 / NCTC 8237 / Type A)</name>
    <dbReference type="NCBI Taxonomy" id="195103"/>
    <lineage>
        <taxon>Bacteria</taxon>
        <taxon>Bacillati</taxon>
        <taxon>Bacillota</taxon>
        <taxon>Clostridia</taxon>
        <taxon>Eubacteriales</taxon>
        <taxon>Clostridiaceae</taxon>
        <taxon>Clostridium</taxon>
    </lineage>
</organism>
<gene>
    <name evidence="1" type="primary">mutS</name>
    <name type="ordered locus">CPF_1358</name>
</gene>
<protein>
    <recommendedName>
        <fullName evidence="1">DNA mismatch repair protein MutS</fullName>
    </recommendedName>
</protein>
<dbReference type="EMBL" id="CP000246">
    <property type="protein sequence ID" value="ABG82875.1"/>
    <property type="molecule type" value="Genomic_DNA"/>
</dbReference>
<dbReference type="RefSeq" id="WP_011590676.1">
    <property type="nucleotide sequence ID" value="NC_008261.1"/>
</dbReference>
<dbReference type="SMR" id="Q0TRD6"/>
<dbReference type="STRING" id="195103.CPF_1358"/>
<dbReference type="PaxDb" id="195103-CPF_1358"/>
<dbReference type="GeneID" id="93002324"/>
<dbReference type="KEGG" id="cpf:CPF_1358"/>
<dbReference type="eggNOG" id="COG0249">
    <property type="taxonomic scope" value="Bacteria"/>
</dbReference>
<dbReference type="HOGENOM" id="CLU_002472_3_1_9"/>
<dbReference type="Proteomes" id="UP000001823">
    <property type="component" value="Chromosome"/>
</dbReference>
<dbReference type="GO" id="GO:0005829">
    <property type="term" value="C:cytosol"/>
    <property type="evidence" value="ECO:0007669"/>
    <property type="project" value="TreeGrafter"/>
</dbReference>
<dbReference type="GO" id="GO:0005524">
    <property type="term" value="F:ATP binding"/>
    <property type="evidence" value="ECO:0007669"/>
    <property type="project" value="UniProtKB-UniRule"/>
</dbReference>
<dbReference type="GO" id="GO:0140664">
    <property type="term" value="F:ATP-dependent DNA damage sensor activity"/>
    <property type="evidence" value="ECO:0007669"/>
    <property type="project" value="InterPro"/>
</dbReference>
<dbReference type="GO" id="GO:0003684">
    <property type="term" value="F:damaged DNA binding"/>
    <property type="evidence" value="ECO:0007669"/>
    <property type="project" value="UniProtKB-UniRule"/>
</dbReference>
<dbReference type="GO" id="GO:0030983">
    <property type="term" value="F:mismatched DNA binding"/>
    <property type="evidence" value="ECO:0007669"/>
    <property type="project" value="InterPro"/>
</dbReference>
<dbReference type="GO" id="GO:0006298">
    <property type="term" value="P:mismatch repair"/>
    <property type="evidence" value="ECO:0007669"/>
    <property type="project" value="UniProtKB-UniRule"/>
</dbReference>
<dbReference type="CDD" id="cd03284">
    <property type="entry name" value="ABC_MutS1"/>
    <property type="match status" value="1"/>
</dbReference>
<dbReference type="FunFam" id="1.10.1420.10:FF:000007">
    <property type="entry name" value="DNA mismatch repair protein MutS"/>
    <property type="match status" value="1"/>
</dbReference>
<dbReference type="FunFam" id="3.40.1170.10:FF:000001">
    <property type="entry name" value="DNA mismatch repair protein MutS"/>
    <property type="match status" value="1"/>
</dbReference>
<dbReference type="FunFam" id="3.40.50.300:FF:001579">
    <property type="entry name" value="DNA mismatch repair protein MutS"/>
    <property type="match status" value="1"/>
</dbReference>
<dbReference type="Gene3D" id="1.10.1420.10">
    <property type="match status" value="2"/>
</dbReference>
<dbReference type="Gene3D" id="3.40.1170.10">
    <property type="entry name" value="DNA repair protein MutS, domain I"/>
    <property type="match status" value="1"/>
</dbReference>
<dbReference type="Gene3D" id="3.30.420.110">
    <property type="entry name" value="MutS, connector domain"/>
    <property type="match status" value="1"/>
</dbReference>
<dbReference type="Gene3D" id="3.40.50.300">
    <property type="entry name" value="P-loop containing nucleotide triphosphate hydrolases"/>
    <property type="match status" value="1"/>
</dbReference>
<dbReference type="HAMAP" id="MF_00096">
    <property type="entry name" value="MutS"/>
    <property type="match status" value="1"/>
</dbReference>
<dbReference type="InterPro" id="IPR005748">
    <property type="entry name" value="DNA_mismatch_repair_MutS"/>
</dbReference>
<dbReference type="InterPro" id="IPR007695">
    <property type="entry name" value="DNA_mismatch_repair_MutS-lik_N"/>
</dbReference>
<dbReference type="InterPro" id="IPR017261">
    <property type="entry name" value="DNA_mismatch_repair_MutS/MSH"/>
</dbReference>
<dbReference type="InterPro" id="IPR000432">
    <property type="entry name" value="DNA_mismatch_repair_MutS_C"/>
</dbReference>
<dbReference type="InterPro" id="IPR007861">
    <property type="entry name" value="DNA_mismatch_repair_MutS_clamp"/>
</dbReference>
<dbReference type="InterPro" id="IPR007696">
    <property type="entry name" value="DNA_mismatch_repair_MutS_core"/>
</dbReference>
<dbReference type="InterPro" id="IPR016151">
    <property type="entry name" value="DNA_mismatch_repair_MutS_N"/>
</dbReference>
<dbReference type="InterPro" id="IPR036187">
    <property type="entry name" value="DNA_mismatch_repair_MutS_sf"/>
</dbReference>
<dbReference type="InterPro" id="IPR007860">
    <property type="entry name" value="DNA_mmatch_repair_MutS_con_dom"/>
</dbReference>
<dbReference type="InterPro" id="IPR045076">
    <property type="entry name" value="MutS"/>
</dbReference>
<dbReference type="InterPro" id="IPR036678">
    <property type="entry name" value="MutS_con_dom_sf"/>
</dbReference>
<dbReference type="InterPro" id="IPR027417">
    <property type="entry name" value="P-loop_NTPase"/>
</dbReference>
<dbReference type="NCBIfam" id="TIGR01070">
    <property type="entry name" value="mutS1"/>
    <property type="match status" value="1"/>
</dbReference>
<dbReference type="NCBIfam" id="NF003810">
    <property type="entry name" value="PRK05399.1"/>
    <property type="match status" value="1"/>
</dbReference>
<dbReference type="PANTHER" id="PTHR11361:SF34">
    <property type="entry name" value="DNA MISMATCH REPAIR PROTEIN MSH1, MITOCHONDRIAL"/>
    <property type="match status" value="1"/>
</dbReference>
<dbReference type="PANTHER" id="PTHR11361">
    <property type="entry name" value="DNA MISMATCH REPAIR PROTEIN MUTS FAMILY MEMBER"/>
    <property type="match status" value="1"/>
</dbReference>
<dbReference type="Pfam" id="PF01624">
    <property type="entry name" value="MutS_I"/>
    <property type="match status" value="1"/>
</dbReference>
<dbReference type="Pfam" id="PF05188">
    <property type="entry name" value="MutS_II"/>
    <property type="match status" value="1"/>
</dbReference>
<dbReference type="Pfam" id="PF05192">
    <property type="entry name" value="MutS_III"/>
    <property type="match status" value="1"/>
</dbReference>
<dbReference type="Pfam" id="PF05190">
    <property type="entry name" value="MutS_IV"/>
    <property type="match status" value="1"/>
</dbReference>
<dbReference type="Pfam" id="PF00488">
    <property type="entry name" value="MutS_V"/>
    <property type="match status" value="1"/>
</dbReference>
<dbReference type="PIRSF" id="PIRSF037677">
    <property type="entry name" value="DNA_mis_repair_Msh6"/>
    <property type="match status" value="1"/>
</dbReference>
<dbReference type="SMART" id="SM00534">
    <property type="entry name" value="MUTSac"/>
    <property type="match status" value="1"/>
</dbReference>
<dbReference type="SMART" id="SM00533">
    <property type="entry name" value="MUTSd"/>
    <property type="match status" value="1"/>
</dbReference>
<dbReference type="SUPFAM" id="SSF55271">
    <property type="entry name" value="DNA repair protein MutS, domain I"/>
    <property type="match status" value="1"/>
</dbReference>
<dbReference type="SUPFAM" id="SSF53150">
    <property type="entry name" value="DNA repair protein MutS, domain II"/>
    <property type="match status" value="1"/>
</dbReference>
<dbReference type="SUPFAM" id="SSF48334">
    <property type="entry name" value="DNA repair protein MutS, domain III"/>
    <property type="match status" value="1"/>
</dbReference>
<dbReference type="SUPFAM" id="SSF52540">
    <property type="entry name" value="P-loop containing nucleoside triphosphate hydrolases"/>
    <property type="match status" value="1"/>
</dbReference>
<dbReference type="PROSITE" id="PS00486">
    <property type="entry name" value="DNA_MISMATCH_REPAIR_2"/>
    <property type="match status" value="1"/>
</dbReference>
<reference key="1">
    <citation type="journal article" date="2006" name="Genome Res.">
        <title>Skewed genomic variability in strains of the toxigenic bacterial pathogen, Clostridium perfringens.</title>
        <authorList>
            <person name="Myers G.S.A."/>
            <person name="Rasko D.A."/>
            <person name="Cheung J.K."/>
            <person name="Ravel J."/>
            <person name="Seshadri R."/>
            <person name="DeBoy R.T."/>
            <person name="Ren Q."/>
            <person name="Varga J."/>
            <person name="Awad M.M."/>
            <person name="Brinkac L.M."/>
            <person name="Daugherty S.C."/>
            <person name="Haft D.H."/>
            <person name="Dodson R.J."/>
            <person name="Madupu R."/>
            <person name="Nelson W.C."/>
            <person name="Rosovitz M.J."/>
            <person name="Sullivan S.A."/>
            <person name="Khouri H."/>
            <person name="Dimitrov G.I."/>
            <person name="Watkins K.L."/>
            <person name="Mulligan S."/>
            <person name="Benton J."/>
            <person name="Radune D."/>
            <person name="Fisher D.J."/>
            <person name="Atkins H.S."/>
            <person name="Hiscox T."/>
            <person name="Jost B.H."/>
            <person name="Billington S.J."/>
            <person name="Songer J.G."/>
            <person name="McClane B.A."/>
            <person name="Titball R.W."/>
            <person name="Rood J.I."/>
            <person name="Melville S.B."/>
            <person name="Paulsen I.T."/>
        </authorList>
    </citation>
    <scope>NUCLEOTIDE SEQUENCE [LARGE SCALE GENOMIC DNA]</scope>
    <source>
        <strain>ATCC 13124 / DSM 756 / JCM 1290 / NCIMB 6125 / NCTC 8237 / S 107 / Type A</strain>
    </source>
</reference>
<proteinExistence type="inferred from homology"/>